<accession>O29370</accession>
<proteinExistence type="evidence at protein level"/>
<reference key="1">
    <citation type="journal article" date="1997" name="Nature">
        <title>The complete genome sequence of the hyperthermophilic, sulphate-reducing archaeon Archaeoglobus fulgidus.</title>
        <authorList>
            <person name="Klenk H.-P."/>
            <person name="Clayton R.A."/>
            <person name="Tomb J.-F."/>
            <person name="White O."/>
            <person name="Nelson K.E."/>
            <person name="Ketchum K.A."/>
            <person name="Dodson R.J."/>
            <person name="Gwinn M.L."/>
            <person name="Hickey E.K."/>
            <person name="Peterson J.D."/>
            <person name="Richardson D.L."/>
            <person name="Kerlavage A.R."/>
            <person name="Graham D.E."/>
            <person name="Kyrpides N.C."/>
            <person name="Fleischmann R.D."/>
            <person name="Quackenbush J."/>
            <person name="Lee N.H."/>
            <person name="Sutton G.G."/>
            <person name="Gill S.R."/>
            <person name="Kirkness E.F."/>
            <person name="Dougherty B.A."/>
            <person name="McKenney K."/>
            <person name="Adams M.D."/>
            <person name="Loftus B.J."/>
            <person name="Peterson S.N."/>
            <person name="Reich C.I."/>
            <person name="McNeil L.K."/>
            <person name="Badger J.H."/>
            <person name="Glodek A."/>
            <person name="Zhou L."/>
            <person name="Overbeek R."/>
            <person name="Gocayne J.D."/>
            <person name="Weidman J.F."/>
            <person name="McDonald L.A."/>
            <person name="Utterback T.R."/>
            <person name="Cotton M.D."/>
            <person name="Spriggs T."/>
            <person name="Artiach P."/>
            <person name="Kaine B.P."/>
            <person name="Sykes S.M."/>
            <person name="Sadow P.W."/>
            <person name="D'Andrea K.P."/>
            <person name="Bowman C."/>
            <person name="Fujii C."/>
            <person name="Garland S.A."/>
            <person name="Mason T.M."/>
            <person name="Olsen G.J."/>
            <person name="Fraser C.M."/>
            <person name="Smith H.O."/>
            <person name="Woese C.R."/>
            <person name="Venter J.C."/>
        </authorList>
    </citation>
    <scope>NUCLEOTIDE SEQUENCE [LARGE SCALE GENOMIC DNA]</scope>
    <source>
        <strain>ATCC 49558 / DSM 4304 / JCM 9628 / NBRC 100126 / VC-16</strain>
    </source>
</reference>
<reference key="2">
    <citation type="journal article" date="1993" name="Arch. Microbiol.">
        <title>A F420-dependent NADP reductase in the extremely thermophilic sulfate-reducing Archaeoglobus fulgidus.</title>
        <authorList>
            <person name="Kunow J."/>
            <person name="Schworer B."/>
            <person name="Stetter K.O."/>
            <person name="Thauer R.K."/>
        </authorList>
    </citation>
    <scope>FUNCTION</scope>
    <scope>CATALYTIC ACTIVITY</scope>
    <scope>SUBSTRATE SPECIFICITY</scope>
    <scope>BIOPHYSICOCHEMICAL PROPERTIES</scope>
    <scope>SUBUNIT</scope>
</reference>
<reference key="3">
    <citation type="journal article" date="2001" name="EMBO J.">
        <title>Structures of F420H2:NADP+ oxidoreductase with and without its substrates bound.</title>
        <authorList>
            <person name="Warkentin E."/>
            <person name="Mamat B."/>
            <person name="Sordel-Klippert M."/>
            <person name="Wicke M."/>
            <person name="Thauer R.K."/>
            <person name="Iwata M."/>
            <person name="Iwata S."/>
            <person name="Ermler U."/>
            <person name="Shima S."/>
        </authorList>
    </citation>
    <scope>X-RAY CRYSTALLOGRAPHY (1.65 ANGSTROMS) OF APOENZYME AND IN COMPLEX WITH F420 AND NADP</scope>
    <scope>FUNCTION</scope>
    <scope>SUBUNIT</scope>
</reference>
<dbReference type="EC" id="1.5.1.40" evidence="2"/>
<dbReference type="EMBL" id="AE000782">
    <property type="protein sequence ID" value="AAB90348.1"/>
    <property type="molecule type" value="Genomic_DNA"/>
</dbReference>
<dbReference type="PIR" id="D69361">
    <property type="entry name" value="D69361"/>
</dbReference>
<dbReference type="RefSeq" id="WP_010878392.1">
    <property type="nucleotide sequence ID" value="NC_000917.1"/>
</dbReference>
<dbReference type="PDB" id="1JAX">
    <property type="method" value="X-ray"/>
    <property type="resolution" value="1.80 A"/>
    <property type="chains" value="A/B=1-212"/>
</dbReference>
<dbReference type="PDB" id="1JAY">
    <property type="method" value="X-ray"/>
    <property type="resolution" value="1.65 A"/>
    <property type="chains" value="A/B=1-212"/>
</dbReference>
<dbReference type="PDBsum" id="1JAX"/>
<dbReference type="PDBsum" id="1JAY"/>
<dbReference type="SMR" id="O29370"/>
<dbReference type="STRING" id="224325.AF_0892"/>
<dbReference type="PaxDb" id="224325-AF_0892"/>
<dbReference type="EnsemblBacteria" id="AAB90348">
    <property type="protein sequence ID" value="AAB90348"/>
    <property type="gene ID" value="AF_0892"/>
</dbReference>
<dbReference type="GeneID" id="1484115"/>
<dbReference type="KEGG" id="afu:AF_0892"/>
<dbReference type="eggNOG" id="arCOG00457">
    <property type="taxonomic scope" value="Archaea"/>
</dbReference>
<dbReference type="HOGENOM" id="CLU_076368_1_1_2"/>
<dbReference type="OrthoDB" id="8635at2157"/>
<dbReference type="PhylomeDB" id="O29370"/>
<dbReference type="BRENDA" id="1.5.1.40">
    <property type="organism ID" value="414"/>
</dbReference>
<dbReference type="EvolutionaryTrace" id="O29370"/>
<dbReference type="Proteomes" id="UP000002199">
    <property type="component" value="Chromosome"/>
</dbReference>
<dbReference type="GO" id="GO:0005886">
    <property type="term" value="C:plasma membrane"/>
    <property type="evidence" value="ECO:0007669"/>
    <property type="project" value="TreeGrafter"/>
</dbReference>
<dbReference type="GO" id="GO:0102261">
    <property type="term" value="F:8-hydroxy-5-deazaflavin:NADPH oxidoreductase activity"/>
    <property type="evidence" value="ECO:0007669"/>
    <property type="project" value="UniProtKB-EC"/>
</dbReference>
<dbReference type="GO" id="GO:0070967">
    <property type="term" value="F:coenzyme F420 binding"/>
    <property type="evidence" value="ECO:0007669"/>
    <property type="project" value="InterPro"/>
</dbReference>
<dbReference type="GO" id="GO:0008823">
    <property type="term" value="F:cupric reductase (NADH) activity"/>
    <property type="evidence" value="ECO:0007669"/>
    <property type="project" value="TreeGrafter"/>
</dbReference>
<dbReference type="GO" id="GO:0052851">
    <property type="term" value="F:ferric-chelate reductase (NADPH) activity"/>
    <property type="evidence" value="ECO:0007669"/>
    <property type="project" value="TreeGrafter"/>
</dbReference>
<dbReference type="GO" id="GO:0050661">
    <property type="term" value="F:NADP binding"/>
    <property type="evidence" value="ECO:0007669"/>
    <property type="project" value="InterPro"/>
</dbReference>
<dbReference type="GO" id="GO:0016651">
    <property type="term" value="F:oxidoreductase activity, acting on NAD(P)H"/>
    <property type="evidence" value="ECO:0007669"/>
    <property type="project" value="InterPro"/>
</dbReference>
<dbReference type="GO" id="GO:0015677">
    <property type="term" value="P:copper ion import"/>
    <property type="evidence" value="ECO:0007669"/>
    <property type="project" value="TreeGrafter"/>
</dbReference>
<dbReference type="GO" id="GO:0006740">
    <property type="term" value="P:NADPH regeneration"/>
    <property type="evidence" value="ECO:0007669"/>
    <property type="project" value="InterPro"/>
</dbReference>
<dbReference type="Gene3D" id="3.40.50.720">
    <property type="entry name" value="NAD(P)-binding Rossmann-like Domain"/>
    <property type="match status" value="1"/>
</dbReference>
<dbReference type="InterPro" id="IPR036291">
    <property type="entry name" value="NAD(P)-bd_dom_sf"/>
</dbReference>
<dbReference type="InterPro" id="IPR010185">
    <property type="entry name" value="NpdG"/>
</dbReference>
<dbReference type="InterPro" id="IPR028939">
    <property type="entry name" value="P5C_Rdtase_cat_N"/>
</dbReference>
<dbReference type="InterPro" id="IPR051267">
    <property type="entry name" value="STEAP_metalloreductase"/>
</dbReference>
<dbReference type="NCBIfam" id="TIGR01915">
    <property type="entry name" value="npdG"/>
    <property type="match status" value="1"/>
</dbReference>
<dbReference type="PANTHER" id="PTHR14239">
    <property type="entry name" value="DUDULIN-RELATED"/>
    <property type="match status" value="1"/>
</dbReference>
<dbReference type="PANTHER" id="PTHR14239:SF0">
    <property type="entry name" value="F420-DEPENDENT NADP REDUCTASE"/>
    <property type="match status" value="1"/>
</dbReference>
<dbReference type="Pfam" id="PF03807">
    <property type="entry name" value="F420_oxidored"/>
    <property type="match status" value="1"/>
</dbReference>
<dbReference type="SUPFAM" id="SSF51735">
    <property type="entry name" value="NAD(P)-binding Rossmann-fold domains"/>
    <property type="match status" value="1"/>
</dbReference>
<name>FNO_ARCFU</name>
<evidence type="ECO:0000269" key="1">
    <source>
    </source>
</evidence>
<evidence type="ECO:0000269" key="2">
    <source ref="2"/>
</evidence>
<evidence type="ECO:0000303" key="3">
    <source>
    </source>
</evidence>
<evidence type="ECO:0000303" key="4">
    <source ref="2"/>
</evidence>
<evidence type="ECO:0000305" key="5"/>
<evidence type="ECO:0007829" key="6">
    <source>
        <dbReference type="PDB" id="1JAX"/>
    </source>
</evidence>
<evidence type="ECO:0007829" key="7">
    <source>
        <dbReference type="PDB" id="1JAY"/>
    </source>
</evidence>
<gene>
    <name type="primary">fno</name>
    <name type="ordered locus">AF_0892</name>
</gene>
<protein>
    <recommendedName>
        <fullName evidence="4">F420-dependent NADP reductase</fullName>
        <ecNumber evidence="2">1.5.1.40</ecNumber>
    </recommendedName>
    <alternativeName>
        <fullName evidence="3">F420H2:NADP(+) oxidoreductase</fullName>
    </alternativeName>
</protein>
<feature type="chain" id="PRO_0000419113" description="F420-dependent NADP reductase">
    <location>
        <begin position="1"/>
        <end position="212"/>
    </location>
</feature>
<feature type="binding site" evidence="1">
    <location>
        <begin position="9"/>
        <end position="12"/>
    </location>
    <ligand>
        <name>NADP(+)</name>
        <dbReference type="ChEBI" id="CHEBI:58349"/>
    </ligand>
</feature>
<feature type="binding site" evidence="1">
    <location>
        <begin position="31"/>
        <end position="32"/>
    </location>
    <ligand>
        <name>NADP(+)</name>
        <dbReference type="ChEBI" id="CHEBI:58349"/>
    </ligand>
</feature>
<feature type="binding site" evidence="1">
    <location>
        <position position="36"/>
    </location>
    <ligand>
        <name>NADP(+)</name>
        <dbReference type="ChEBI" id="CHEBI:58349"/>
    </ligand>
</feature>
<feature type="binding site" evidence="1">
    <location>
        <position position="72"/>
    </location>
    <ligand>
        <name>NADP(+)</name>
        <dbReference type="ChEBI" id="CHEBI:58349"/>
    </ligand>
</feature>
<feature type="binding site" evidence="1">
    <location>
        <position position="76"/>
    </location>
    <ligand>
        <name>NADP(+)</name>
        <dbReference type="ChEBI" id="CHEBI:58349"/>
    </ligand>
</feature>
<feature type="binding site" evidence="1">
    <location>
        <position position="98"/>
    </location>
    <ligand>
        <name>NADP(+)</name>
        <dbReference type="ChEBI" id="CHEBI:58349"/>
    </ligand>
</feature>
<feature type="binding site" evidence="1">
    <location>
        <position position="137"/>
    </location>
    <ligand>
        <name>NADP(+)</name>
        <dbReference type="ChEBI" id="CHEBI:58349"/>
    </ligand>
</feature>
<feature type="binding site" evidence="1">
    <location>
        <position position="207"/>
    </location>
    <ligand>
        <name>coenzyme F420-(gamma-Glu)n</name>
        <dbReference type="ChEBI" id="CHEBI:133980"/>
    </ligand>
</feature>
<feature type="strand" evidence="7">
    <location>
        <begin position="2"/>
        <end position="6"/>
    </location>
</feature>
<feature type="turn" evidence="7">
    <location>
        <begin position="7"/>
        <end position="9"/>
    </location>
</feature>
<feature type="helix" evidence="7">
    <location>
        <begin position="11"/>
        <end position="21"/>
    </location>
</feature>
<feature type="turn" evidence="7">
    <location>
        <begin position="22"/>
        <end position="24"/>
    </location>
</feature>
<feature type="strand" evidence="7">
    <location>
        <begin position="26"/>
        <end position="33"/>
    </location>
</feature>
<feature type="helix" evidence="7">
    <location>
        <begin position="34"/>
        <end position="48"/>
    </location>
</feature>
<feature type="strand" evidence="7">
    <location>
        <begin position="53"/>
        <end position="57"/>
    </location>
</feature>
<feature type="helix" evidence="7">
    <location>
        <begin position="58"/>
        <end position="64"/>
    </location>
</feature>
<feature type="strand" evidence="7">
    <location>
        <begin position="66"/>
        <end position="70"/>
    </location>
</feature>
<feature type="helix" evidence="7">
    <location>
        <begin position="74"/>
        <end position="83"/>
    </location>
</feature>
<feature type="helix" evidence="7">
    <location>
        <begin position="85"/>
        <end position="88"/>
    </location>
</feature>
<feature type="strand" evidence="7">
    <location>
        <begin position="91"/>
        <end position="95"/>
    </location>
</feature>
<feature type="strand" evidence="6">
    <location>
        <begin position="100"/>
        <end position="103"/>
    </location>
</feature>
<feature type="strand" evidence="6">
    <location>
        <begin position="106"/>
        <end position="109"/>
    </location>
</feature>
<feature type="helix" evidence="7">
    <location>
        <begin position="115"/>
        <end position="123"/>
    </location>
</feature>
<feature type="strand" evidence="7">
    <location>
        <begin position="128"/>
        <end position="130"/>
    </location>
</feature>
<feature type="helix" evidence="7">
    <location>
        <begin position="137"/>
        <end position="141"/>
    </location>
</feature>
<feature type="strand" evidence="7">
    <location>
        <begin position="149"/>
        <end position="156"/>
    </location>
</feature>
<feature type="helix" evidence="7">
    <location>
        <begin position="158"/>
        <end position="170"/>
    </location>
</feature>
<feature type="strand" evidence="7">
    <location>
        <begin position="174"/>
        <end position="181"/>
    </location>
</feature>
<feature type="helix" evidence="7">
    <location>
        <begin position="182"/>
        <end position="184"/>
    </location>
</feature>
<feature type="helix" evidence="7">
    <location>
        <begin position="185"/>
        <end position="189"/>
    </location>
</feature>
<feature type="helix" evidence="7">
    <location>
        <begin position="191"/>
        <end position="202"/>
    </location>
</feature>
<feature type="strand" evidence="7">
    <location>
        <begin position="209"/>
        <end position="211"/>
    </location>
</feature>
<comment type="function">
    <text evidence="1 2">Catalyzes the reversible reduction of NADP(+) by F420H(2). In this reaction the proS hydrogen at C5 of F420 is transferred into the proS position at C4 of NADPH.</text>
</comment>
<comment type="catalytic activity">
    <reaction evidence="2">
        <text>reduced coenzyme F420-(gamma-L-Glu)(n) + NADP(+) = oxidized coenzyme F420-(gamma-L-Glu)(n) + NADPH + 2 H(+)</text>
        <dbReference type="Rhea" id="RHEA:31363"/>
        <dbReference type="Rhea" id="RHEA-COMP:12939"/>
        <dbReference type="Rhea" id="RHEA-COMP:14378"/>
        <dbReference type="ChEBI" id="CHEBI:15378"/>
        <dbReference type="ChEBI" id="CHEBI:57783"/>
        <dbReference type="ChEBI" id="CHEBI:58349"/>
        <dbReference type="ChEBI" id="CHEBI:133980"/>
        <dbReference type="ChEBI" id="CHEBI:139511"/>
        <dbReference type="EC" id="1.5.1.40"/>
    </reaction>
</comment>
<comment type="biophysicochemical properties">
    <kinetics>
        <KM evidence="2">20 uM for reduced coenzyme F420 (at pH 8.0 and 65 degrees Celsius)</KM>
        <KM evidence="2">40 uM for NADP(+) (at pH 8.0 and 65 degrees Celsius)</KM>
        <KM evidence="2">10 uM for oxidized coenzyme F420 (at pH 5.5 and 65 degrees Celsius)</KM>
        <KM evidence="2">40 uM for NADPH (at pH 5.5 and 65 degrees Celsius)</KM>
        <Vmax evidence="2">660.0 umol/min/mg enzyme for NADP reduction with F420H(2) (at pH 5.5 and 80 degrees Celsius)</Vmax>
    </kinetics>
    <phDependence>
        <text evidence="2">Optimum pH is 8.0 for NADP reduction with F420H(2). Optimum pH is 5.5 for F420 reduction with NADPH.</text>
    </phDependence>
    <temperatureDependence>
        <text evidence="2">Optimum temperature is 80 degrees Celsius. Is highly thermostable.</text>
    </temperatureDependence>
</comment>
<comment type="subunit">
    <text evidence="1 2">Homodimer.</text>
</comment>
<comment type="similarity">
    <text evidence="5">Belongs to the F420-dependent NADP reductase family.</text>
</comment>
<keyword id="KW-0002">3D-structure</keyword>
<keyword id="KW-0521">NADP</keyword>
<keyword id="KW-0547">Nucleotide-binding</keyword>
<keyword id="KW-0560">Oxidoreductase</keyword>
<keyword id="KW-1185">Reference proteome</keyword>
<organism>
    <name type="scientific">Archaeoglobus fulgidus (strain ATCC 49558 / DSM 4304 / JCM 9628 / NBRC 100126 / VC-16)</name>
    <dbReference type="NCBI Taxonomy" id="224325"/>
    <lineage>
        <taxon>Archaea</taxon>
        <taxon>Methanobacteriati</taxon>
        <taxon>Methanobacteriota</taxon>
        <taxon>Archaeoglobi</taxon>
        <taxon>Archaeoglobales</taxon>
        <taxon>Archaeoglobaceae</taxon>
        <taxon>Archaeoglobus</taxon>
    </lineage>
</organism>
<sequence>MRVALLGGTGNLGKGLALRLATLGHEIVVGSRREEKAEAKAAEYRRIAGDASITGMKNEDAAEACDIAVLTIPWEHAIDTARDLKNILREKIVVSPLVPVSRGAKGFTYSSERSAAEIVAEVLESEKVVSALHTIPAARFANLDEKFDWDVPVCGDDDESKKVVMSLISEIDGLRPLDAGPLSNSRLVESLTPLILNIMRFNGMGELGIKFL</sequence>